<evidence type="ECO:0000255" key="1">
    <source>
        <dbReference type="HAMAP-Rule" id="MF_00218"/>
    </source>
</evidence>
<dbReference type="EC" id="4.1.1.37" evidence="1"/>
<dbReference type="EMBL" id="CP000948">
    <property type="protein sequence ID" value="ACB05000.1"/>
    <property type="molecule type" value="Genomic_DNA"/>
</dbReference>
<dbReference type="RefSeq" id="WP_000137657.1">
    <property type="nucleotide sequence ID" value="NC_010473.1"/>
</dbReference>
<dbReference type="SMR" id="B1XC00"/>
<dbReference type="GeneID" id="93777897"/>
<dbReference type="KEGG" id="ecd:ECDH10B_4186"/>
<dbReference type="HOGENOM" id="CLU_040933_0_0_6"/>
<dbReference type="UniPathway" id="UPA00251">
    <property type="reaction ID" value="UER00321"/>
</dbReference>
<dbReference type="GO" id="GO:0005829">
    <property type="term" value="C:cytosol"/>
    <property type="evidence" value="ECO:0007669"/>
    <property type="project" value="TreeGrafter"/>
</dbReference>
<dbReference type="GO" id="GO:0004853">
    <property type="term" value="F:uroporphyrinogen decarboxylase activity"/>
    <property type="evidence" value="ECO:0007669"/>
    <property type="project" value="UniProtKB-UniRule"/>
</dbReference>
<dbReference type="GO" id="GO:0019353">
    <property type="term" value="P:protoporphyrinogen IX biosynthetic process from glutamate"/>
    <property type="evidence" value="ECO:0007669"/>
    <property type="project" value="TreeGrafter"/>
</dbReference>
<dbReference type="CDD" id="cd00717">
    <property type="entry name" value="URO-D"/>
    <property type="match status" value="1"/>
</dbReference>
<dbReference type="FunFam" id="3.20.20.210:FF:000001">
    <property type="entry name" value="Uroporphyrinogen decarboxylase"/>
    <property type="match status" value="1"/>
</dbReference>
<dbReference type="Gene3D" id="3.20.20.210">
    <property type="match status" value="1"/>
</dbReference>
<dbReference type="HAMAP" id="MF_00218">
    <property type="entry name" value="URO_D"/>
    <property type="match status" value="1"/>
</dbReference>
<dbReference type="InterPro" id="IPR038071">
    <property type="entry name" value="UROD/MetE-like_sf"/>
</dbReference>
<dbReference type="InterPro" id="IPR006361">
    <property type="entry name" value="Uroporphyrinogen_deCO2ase_HemE"/>
</dbReference>
<dbReference type="InterPro" id="IPR000257">
    <property type="entry name" value="Uroporphyrinogen_deCOase"/>
</dbReference>
<dbReference type="NCBIfam" id="TIGR01464">
    <property type="entry name" value="hemE"/>
    <property type="match status" value="1"/>
</dbReference>
<dbReference type="PANTHER" id="PTHR21091">
    <property type="entry name" value="METHYLTETRAHYDROFOLATE:HOMOCYSTEINE METHYLTRANSFERASE RELATED"/>
    <property type="match status" value="1"/>
</dbReference>
<dbReference type="PANTHER" id="PTHR21091:SF169">
    <property type="entry name" value="UROPORPHYRINOGEN DECARBOXYLASE"/>
    <property type="match status" value="1"/>
</dbReference>
<dbReference type="Pfam" id="PF01208">
    <property type="entry name" value="URO-D"/>
    <property type="match status" value="1"/>
</dbReference>
<dbReference type="SUPFAM" id="SSF51726">
    <property type="entry name" value="UROD/MetE-like"/>
    <property type="match status" value="1"/>
</dbReference>
<dbReference type="PROSITE" id="PS00906">
    <property type="entry name" value="UROD_1"/>
    <property type="match status" value="1"/>
</dbReference>
<dbReference type="PROSITE" id="PS00907">
    <property type="entry name" value="UROD_2"/>
    <property type="match status" value="1"/>
</dbReference>
<feature type="chain" id="PRO_1000099990" description="Uroporphyrinogen decarboxylase">
    <location>
        <begin position="1"/>
        <end position="354"/>
    </location>
</feature>
<feature type="binding site" evidence="1">
    <location>
        <begin position="27"/>
        <end position="31"/>
    </location>
    <ligand>
        <name>substrate</name>
    </ligand>
</feature>
<feature type="binding site" evidence="1">
    <location>
        <position position="77"/>
    </location>
    <ligand>
        <name>substrate</name>
    </ligand>
</feature>
<feature type="binding site" evidence="1">
    <location>
        <position position="154"/>
    </location>
    <ligand>
        <name>substrate</name>
    </ligand>
</feature>
<feature type="binding site" evidence="1">
    <location>
        <position position="209"/>
    </location>
    <ligand>
        <name>substrate</name>
    </ligand>
</feature>
<feature type="binding site" evidence="1">
    <location>
        <position position="327"/>
    </location>
    <ligand>
        <name>substrate</name>
    </ligand>
</feature>
<feature type="site" description="Transition state stabilizer" evidence="1">
    <location>
        <position position="77"/>
    </location>
</feature>
<accession>B1XC00</accession>
<keyword id="KW-0963">Cytoplasm</keyword>
<keyword id="KW-0210">Decarboxylase</keyword>
<keyword id="KW-0456">Lyase</keyword>
<keyword id="KW-0627">Porphyrin biosynthesis</keyword>
<organism>
    <name type="scientific">Escherichia coli (strain K12 / DH10B)</name>
    <dbReference type="NCBI Taxonomy" id="316385"/>
    <lineage>
        <taxon>Bacteria</taxon>
        <taxon>Pseudomonadati</taxon>
        <taxon>Pseudomonadota</taxon>
        <taxon>Gammaproteobacteria</taxon>
        <taxon>Enterobacterales</taxon>
        <taxon>Enterobacteriaceae</taxon>
        <taxon>Escherichia</taxon>
    </lineage>
</organism>
<gene>
    <name evidence="1" type="primary">hemE</name>
    <name type="ordered locus">ECDH10B_4186</name>
</gene>
<sequence>MTELKNDRYLRALLRQPVDVTPVWMMRQAGRYLPEYKATRAQAGDFMSLCKNAELACEVTLQPLRRYPLDAAILFSDILTVPDAMGLGLYFEAGEGPRFTSPVTCKADVDKLPIPDPEDELGYVMNAVRTIRRELKGEVPLIGFSGSPWTLATYMVEGGSSKAFTVIKKMMYADPQALHALLDKLAKSVTLYLNAQIKAGAQAVMIFDTWGGVLTGRDYQQFSLYYMHKIVDGLLRENDGRRVPVTLFTKGGGQWLEAMAETGCDALGLDWTTDIADARRRVGNKVALQGNMDPSMLYAPPARIEEEVATILAGFGHGEGHVFNLGHGIHQDVPPEHAGVFVEAVHRLSEQYHR</sequence>
<proteinExistence type="inferred from homology"/>
<protein>
    <recommendedName>
        <fullName evidence="1">Uroporphyrinogen decarboxylase</fullName>
        <shortName evidence="1">UPD</shortName>
        <shortName evidence="1">URO-D</shortName>
        <ecNumber evidence="1">4.1.1.37</ecNumber>
    </recommendedName>
</protein>
<comment type="function">
    <text evidence="1">Catalyzes the decarboxylation of four acetate groups of uroporphyrinogen-III to yield coproporphyrinogen-III.</text>
</comment>
<comment type="catalytic activity">
    <reaction evidence="1">
        <text>uroporphyrinogen III + 4 H(+) = coproporphyrinogen III + 4 CO2</text>
        <dbReference type="Rhea" id="RHEA:19865"/>
        <dbReference type="ChEBI" id="CHEBI:15378"/>
        <dbReference type="ChEBI" id="CHEBI:16526"/>
        <dbReference type="ChEBI" id="CHEBI:57308"/>
        <dbReference type="ChEBI" id="CHEBI:57309"/>
        <dbReference type="EC" id="4.1.1.37"/>
    </reaction>
</comment>
<comment type="pathway">
    <text evidence="1">Porphyrin-containing compound metabolism; protoporphyrin-IX biosynthesis; coproporphyrinogen-III from 5-aminolevulinate: step 4/4.</text>
</comment>
<comment type="subunit">
    <text evidence="1">Homodimer.</text>
</comment>
<comment type="subcellular location">
    <subcellularLocation>
        <location evidence="1">Cytoplasm</location>
    </subcellularLocation>
</comment>
<comment type="similarity">
    <text evidence="1">Belongs to the uroporphyrinogen decarboxylase family.</text>
</comment>
<reference key="1">
    <citation type="journal article" date="2008" name="J. Bacteriol.">
        <title>The complete genome sequence of Escherichia coli DH10B: insights into the biology of a laboratory workhorse.</title>
        <authorList>
            <person name="Durfee T."/>
            <person name="Nelson R."/>
            <person name="Baldwin S."/>
            <person name="Plunkett G. III"/>
            <person name="Burland V."/>
            <person name="Mau B."/>
            <person name="Petrosino J.F."/>
            <person name="Qin X."/>
            <person name="Muzny D.M."/>
            <person name="Ayele M."/>
            <person name="Gibbs R.A."/>
            <person name="Csorgo B."/>
            <person name="Posfai G."/>
            <person name="Weinstock G.M."/>
            <person name="Blattner F.R."/>
        </authorList>
    </citation>
    <scope>NUCLEOTIDE SEQUENCE [LARGE SCALE GENOMIC DNA]</scope>
    <source>
        <strain>K12 / DH10B</strain>
    </source>
</reference>
<name>DCUP_ECODH</name>